<dbReference type="EMBL" id="CP000010">
    <property type="protein sequence ID" value="AAU49314.1"/>
    <property type="molecule type" value="Genomic_DNA"/>
</dbReference>
<dbReference type="RefSeq" id="WP_004191477.1">
    <property type="nucleotide sequence ID" value="NC_006348.1"/>
</dbReference>
<dbReference type="RefSeq" id="YP_102785.1">
    <property type="nucleotide sequence ID" value="NC_006348.1"/>
</dbReference>
<dbReference type="SMR" id="Q62KI4"/>
<dbReference type="GeneID" id="98102115"/>
<dbReference type="KEGG" id="bma:BMA1094"/>
<dbReference type="PATRIC" id="fig|243160.12.peg.1127"/>
<dbReference type="eggNOG" id="COG0291">
    <property type="taxonomic scope" value="Bacteria"/>
</dbReference>
<dbReference type="HOGENOM" id="CLU_169643_1_0_4"/>
<dbReference type="PRO" id="PR:Q62KI4"/>
<dbReference type="Proteomes" id="UP000006693">
    <property type="component" value="Chromosome 1"/>
</dbReference>
<dbReference type="GO" id="GO:0022625">
    <property type="term" value="C:cytosolic large ribosomal subunit"/>
    <property type="evidence" value="ECO:0007669"/>
    <property type="project" value="TreeGrafter"/>
</dbReference>
<dbReference type="GO" id="GO:0003735">
    <property type="term" value="F:structural constituent of ribosome"/>
    <property type="evidence" value="ECO:0007669"/>
    <property type="project" value="InterPro"/>
</dbReference>
<dbReference type="GO" id="GO:0006412">
    <property type="term" value="P:translation"/>
    <property type="evidence" value="ECO:0007669"/>
    <property type="project" value="UniProtKB-UniRule"/>
</dbReference>
<dbReference type="FunFam" id="4.10.410.60:FF:000001">
    <property type="entry name" value="50S ribosomal protein L35"/>
    <property type="match status" value="1"/>
</dbReference>
<dbReference type="Gene3D" id="4.10.410.60">
    <property type="match status" value="1"/>
</dbReference>
<dbReference type="HAMAP" id="MF_00514">
    <property type="entry name" value="Ribosomal_bL35"/>
    <property type="match status" value="1"/>
</dbReference>
<dbReference type="InterPro" id="IPR001706">
    <property type="entry name" value="Ribosomal_bL35"/>
</dbReference>
<dbReference type="InterPro" id="IPR021137">
    <property type="entry name" value="Ribosomal_bL35-like"/>
</dbReference>
<dbReference type="InterPro" id="IPR018265">
    <property type="entry name" value="Ribosomal_bL35_CS"/>
</dbReference>
<dbReference type="InterPro" id="IPR037229">
    <property type="entry name" value="Ribosomal_bL35_sf"/>
</dbReference>
<dbReference type="NCBIfam" id="TIGR00001">
    <property type="entry name" value="rpmI_bact"/>
    <property type="match status" value="1"/>
</dbReference>
<dbReference type="PANTHER" id="PTHR33343">
    <property type="entry name" value="54S RIBOSOMAL PROTEIN BL35M"/>
    <property type="match status" value="1"/>
</dbReference>
<dbReference type="PANTHER" id="PTHR33343:SF1">
    <property type="entry name" value="LARGE RIBOSOMAL SUBUNIT PROTEIN BL35M"/>
    <property type="match status" value="1"/>
</dbReference>
<dbReference type="Pfam" id="PF01632">
    <property type="entry name" value="Ribosomal_L35p"/>
    <property type="match status" value="1"/>
</dbReference>
<dbReference type="PRINTS" id="PR00064">
    <property type="entry name" value="RIBOSOMALL35"/>
</dbReference>
<dbReference type="SUPFAM" id="SSF143034">
    <property type="entry name" value="L35p-like"/>
    <property type="match status" value="1"/>
</dbReference>
<dbReference type="PROSITE" id="PS00936">
    <property type="entry name" value="RIBOSOMAL_L35"/>
    <property type="match status" value="1"/>
</dbReference>
<comment type="similarity">
    <text evidence="1">Belongs to the bacterial ribosomal protein bL35 family.</text>
</comment>
<accession>Q62KI4</accession>
<sequence>MPKMKTKKSAAKRFVVRPGGTVKRGQAFKRHILTKKTTKNKRHLRGATAVHDSDLNSVRAMLPFA</sequence>
<evidence type="ECO:0000255" key="1">
    <source>
        <dbReference type="HAMAP-Rule" id="MF_00514"/>
    </source>
</evidence>
<evidence type="ECO:0000305" key="2"/>
<keyword id="KW-1185">Reference proteome</keyword>
<keyword id="KW-0687">Ribonucleoprotein</keyword>
<keyword id="KW-0689">Ribosomal protein</keyword>
<name>RL35_BURMA</name>
<gene>
    <name evidence="1" type="primary">rpmI</name>
    <name type="ordered locus">BMA1094</name>
</gene>
<feature type="chain" id="PRO_0000258647" description="Large ribosomal subunit protein bL35">
    <location>
        <begin position="1"/>
        <end position="65"/>
    </location>
</feature>
<protein>
    <recommendedName>
        <fullName evidence="1">Large ribosomal subunit protein bL35</fullName>
    </recommendedName>
    <alternativeName>
        <fullName evidence="2">50S ribosomal protein L35</fullName>
    </alternativeName>
</protein>
<organism>
    <name type="scientific">Burkholderia mallei (strain ATCC 23344)</name>
    <dbReference type="NCBI Taxonomy" id="243160"/>
    <lineage>
        <taxon>Bacteria</taxon>
        <taxon>Pseudomonadati</taxon>
        <taxon>Pseudomonadota</taxon>
        <taxon>Betaproteobacteria</taxon>
        <taxon>Burkholderiales</taxon>
        <taxon>Burkholderiaceae</taxon>
        <taxon>Burkholderia</taxon>
        <taxon>pseudomallei group</taxon>
    </lineage>
</organism>
<reference key="1">
    <citation type="journal article" date="2004" name="Proc. Natl. Acad. Sci. U.S.A.">
        <title>Structural flexibility in the Burkholderia mallei genome.</title>
        <authorList>
            <person name="Nierman W.C."/>
            <person name="DeShazer D."/>
            <person name="Kim H.S."/>
            <person name="Tettelin H."/>
            <person name="Nelson K.E."/>
            <person name="Feldblyum T.V."/>
            <person name="Ulrich R.L."/>
            <person name="Ronning C.M."/>
            <person name="Brinkac L.M."/>
            <person name="Daugherty S.C."/>
            <person name="Davidsen T.D."/>
            <person name="DeBoy R.T."/>
            <person name="Dimitrov G."/>
            <person name="Dodson R.J."/>
            <person name="Durkin A.S."/>
            <person name="Gwinn M.L."/>
            <person name="Haft D.H."/>
            <person name="Khouri H.M."/>
            <person name="Kolonay J.F."/>
            <person name="Madupu R."/>
            <person name="Mohammoud Y."/>
            <person name="Nelson W.C."/>
            <person name="Radune D."/>
            <person name="Romero C.M."/>
            <person name="Sarria S."/>
            <person name="Selengut J."/>
            <person name="Shamblin C."/>
            <person name="Sullivan S.A."/>
            <person name="White O."/>
            <person name="Yu Y."/>
            <person name="Zafar N."/>
            <person name="Zhou L."/>
            <person name="Fraser C.M."/>
        </authorList>
    </citation>
    <scope>NUCLEOTIDE SEQUENCE [LARGE SCALE GENOMIC DNA]</scope>
    <source>
        <strain>ATCC 23344</strain>
    </source>
</reference>
<proteinExistence type="inferred from homology"/>